<sequence>MSKKTTKDVRNLSDSEMSDKIQNLRKELFDLRFKQATRQLAKTHRFKEARTELAQLLTVSNERSRSNTSS</sequence>
<organism>
    <name type="scientific">Prochlorococcus marinus (strain NATL1A)</name>
    <dbReference type="NCBI Taxonomy" id="167555"/>
    <lineage>
        <taxon>Bacteria</taxon>
        <taxon>Bacillati</taxon>
        <taxon>Cyanobacteriota</taxon>
        <taxon>Cyanophyceae</taxon>
        <taxon>Synechococcales</taxon>
        <taxon>Prochlorococcaceae</taxon>
        <taxon>Prochlorococcus</taxon>
    </lineage>
</organism>
<evidence type="ECO:0000255" key="1">
    <source>
        <dbReference type="HAMAP-Rule" id="MF_00374"/>
    </source>
</evidence>
<evidence type="ECO:0000305" key="2"/>
<feature type="chain" id="PRO_1000007553" description="Large ribosomal subunit protein uL29">
    <location>
        <begin position="1"/>
        <end position="70"/>
    </location>
</feature>
<proteinExistence type="inferred from homology"/>
<name>RL29_PROM1</name>
<keyword id="KW-0687">Ribonucleoprotein</keyword>
<keyword id="KW-0689">Ribosomal protein</keyword>
<comment type="similarity">
    <text evidence="1">Belongs to the universal ribosomal protein uL29 family.</text>
</comment>
<gene>
    <name evidence="1" type="primary">rpmC</name>
    <name evidence="1" type="synonym">rpl29</name>
    <name type="ordered locus">NATL1_19951</name>
</gene>
<accession>A2C4Z1</accession>
<dbReference type="EMBL" id="CP000553">
    <property type="protein sequence ID" value="ABM76551.1"/>
    <property type="molecule type" value="Genomic_DNA"/>
</dbReference>
<dbReference type="RefSeq" id="WP_011824510.1">
    <property type="nucleotide sequence ID" value="NC_008819.1"/>
</dbReference>
<dbReference type="SMR" id="A2C4Z1"/>
<dbReference type="KEGG" id="pme:NATL1_19951"/>
<dbReference type="eggNOG" id="COG0255">
    <property type="taxonomic scope" value="Bacteria"/>
</dbReference>
<dbReference type="HOGENOM" id="CLU_158491_0_1_3"/>
<dbReference type="Proteomes" id="UP000002592">
    <property type="component" value="Chromosome"/>
</dbReference>
<dbReference type="GO" id="GO:0022625">
    <property type="term" value="C:cytosolic large ribosomal subunit"/>
    <property type="evidence" value="ECO:0007669"/>
    <property type="project" value="TreeGrafter"/>
</dbReference>
<dbReference type="GO" id="GO:0003735">
    <property type="term" value="F:structural constituent of ribosome"/>
    <property type="evidence" value="ECO:0007669"/>
    <property type="project" value="InterPro"/>
</dbReference>
<dbReference type="GO" id="GO:0006412">
    <property type="term" value="P:translation"/>
    <property type="evidence" value="ECO:0007669"/>
    <property type="project" value="UniProtKB-UniRule"/>
</dbReference>
<dbReference type="CDD" id="cd00427">
    <property type="entry name" value="Ribosomal_L29_HIP"/>
    <property type="match status" value="1"/>
</dbReference>
<dbReference type="Gene3D" id="1.10.287.310">
    <property type="match status" value="1"/>
</dbReference>
<dbReference type="HAMAP" id="MF_00374">
    <property type="entry name" value="Ribosomal_uL29"/>
    <property type="match status" value="1"/>
</dbReference>
<dbReference type="InterPro" id="IPR050063">
    <property type="entry name" value="Ribosomal_protein_uL29"/>
</dbReference>
<dbReference type="InterPro" id="IPR001854">
    <property type="entry name" value="Ribosomal_uL29"/>
</dbReference>
<dbReference type="InterPro" id="IPR036049">
    <property type="entry name" value="Ribosomal_uL29_sf"/>
</dbReference>
<dbReference type="NCBIfam" id="TIGR00012">
    <property type="entry name" value="L29"/>
    <property type="match status" value="1"/>
</dbReference>
<dbReference type="PANTHER" id="PTHR10916">
    <property type="entry name" value="60S RIBOSOMAL PROTEIN L35/50S RIBOSOMAL PROTEIN L29"/>
    <property type="match status" value="1"/>
</dbReference>
<dbReference type="PANTHER" id="PTHR10916:SF0">
    <property type="entry name" value="LARGE RIBOSOMAL SUBUNIT PROTEIN UL29C"/>
    <property type="match status" value="1"/>
</dbReference>
<dbReference type="Pfam" id="PF00831">
    <property type="entry name" value="Ribosomal_L29"/>
    <property type="match status" value="1"/>
</dbReference>
<dbReference type="SUPFAM" id="SSF46561">
    <property type="entry name" value="Ribosomal protein L29 (L29p)"/>
    <property type="match status" value="1"/>
</dbReference>
<reference key="1">
    <citation type="journal article" date="2007" name="PLoS Genet.">
        <title>Patterns and implications of gene gain and loss in the evolution of Prochlorococcus.</title>
        <authorList>
            <person name="Kettler G.C."/>
            <person name="Martiny A.C."/>
            <person name="Huang K."/>
            <person name="Zucker J."/>
            <person name="Coleman M.L."/>
            <person name="Rodrigue S."/>
            <person name="Chen F."/>
            <person name="Lapidus A."/>
            <person name="Ferriera S."/>
            <person name="Johnson J."/>
            <person name="Steglich C."/>
            <person name="Church G.M."/>
            <person name="Richardson P."/>
            <person name="Chisholm S.W."/>
        </authorList>
    </citation>
    <scope>NUCLEOTIDE SEQUENCE [LARGE SCALE GENOMIC DNA]</scope>
    <source>
        <strain>NATL1A</strain>
    </source>
</reference>
<protein>
    <recommendedName>
        <fullName evidence="1">Large ribosomal subunit protein uL29</fullName>
    </recommendedName>
    <alternativeName>
        <fullName evidence="2">50S ribosomal protein L29</fullName>
    </alternativeName>
</protein>